<gene>
    <name evidence="5" type="primary">eEF1beta</name>
    <name evidence="5" type="ORF">CG6341</name>
</gene>
<keyword id="KW-0251">Elongation factor</keyword>
<keyword id="KW-0597">Phosphoprotein</keyword>
<keyword id="KW-0648">Protein biosynthesis</keyword>
<keyword id="KW-1185">Reference proteome</keyword>
<feature type="initiator methionine" description="Removed" evidence="1">
    <location>
        <position position="1"/>
    </location>
</feature>
<feature type="chain" id="PRO_0000155045" description="Probable elongation factor 1-beta">
    <location>
        <begin position="2"/>
        <end position="222"/>
    </location>
</feature>
<feature type="region of interest" description="Disordered" evidence="2">
    <location>
        <begin position="90"/>
        <end position="111"/>
    </location>
</feature>
<feature type="compositionally biased region" description="Acidic residues" evidence="2">
    <location>
        <begin position="94"/>
        <end position="111"/>
    </location>
</feature>
<feature type="modified residue" description="Phosphoserine" evidence="3">
    <location>
        <position position="104"/>
    </location>
</feature>
<sequence>MAFGDVTTPQGLKELNAFLADNSYISGYTPSKADLSVFDALGKAPSADNVNVARWYRHIASFEAAERAAWSGTPLPQLAGGKPTVAAAAKPAADDDDDVDLFGSDDEEDEEAERIKQERVAAYAAKKSKKPALIAKSSVLLDVKPWDDETDMKEMENNVRTIEMDGLLWGASKLVPVGYGINKLQIMCVIEDDKVSIDLLQEKIEEFEDFVQSVDIAAFNKI</sequence>
<dbReference type="EMBL" id="AE013599">
    <property type="protein sequence ID" value="AAF57941.3"/>
    <property type="molecule type" value="Genomic_DNA"/>
</dbReference>
<dbReference type="EMBL" id="AL031863">
    <property type="protein sequence ID" value="CAA21314.1"/>
    <property type="molecule type" value="Genomic_DNA"/>
</dbReference>
<dbReference type="EMBL" id="AF172636">
    <property type="protein sequence ID" value="AAD46929.2"/>
    <property type="status" value="ALT_INIT"/>
    <property type="molecule type" value="mRNA"/>
</dbReference>
<dbReference type="PIR" id="T13689">
    <property type="entry name" value="T13689"/>
</dbReference>
<dbReference type="RefSeq" id="NP_001286506.1">
    <property type="nucleotide sequence ID" value="NM_001299577.1"/>
</dbReference>
<dbReference type="RefSeq" id="NP_524808.3">
    <property type="nucleotide sequence ID" value="NM_080069.4"/>
</dbReference>
<dbReference type="SMR" id="O96827"/>
<dbReference type="BioGRID" id="69539">
    <property type="interactions" value="11"/>
</dbReference>
<dbReference type="DIP" id="DIP-20265N"/>
<dbReference type="FunCoup" id="O96827">
    <property type="interactions" value="1861"/>
</dbReference>
<dbReference type="IntAct" id="O96827">
    <property type="interactions" value="15"/>
</dbReference>
<dbReference type="STRING" id="7227.FBpp0311691"/>
<dbReference type="GlyGen" id="O96827">
    <property type="glycosylation" value="1 site, 1 O-linked glycan (1 site)"/>
</dbReference>
<dbReference type="iPTMnet" id="O96827"/>
<dbReference type="PaxDb" id="7227-FBpp0305165"/>
<dbReference type="DNASU" id="45249"/>
<dbReference type="EnsemblMetazoa" id="FBtr0332947">
    <property type="protein sequence ID" value="FBpp0305165"/>
    <property type="gene ID" value="FBgn0028737"/>
</dbReference>
<dbReference type="EnsemblMetazoa" id="FBtr0345627">
    <property type="protein sequence ID" value="FBpp0311691"/>
    <property type="gene ID" value="FBgn0028737"/>
</dbReference>
<dbReference type="GeneID" id="45249"/>
<dbReference type="KEGG" id="dme:Dmel_CG6341"/>
<dbReference type="AGR" id="FB:FBgn0028737"/>
<dbReference type="CTD" id="45249"/>
<dbReference type="FlyBase" id="FBgn0028737">
    <property type="gene designation" value="eEF1beta"/>
</dbReference>
<dbReference type="VEuPathDB" id="VectorBase:FBgn0028737"/>
<dbReference type="eggNOG" id="KOG1668">
    <property type="taxonomic scope" value="Eukaryota"/>
</dbReference>
<dbReference type="GeneTree" id="ENSGT00950000183014"/>
<dbReference type="HOGENOM" id="CLU_050172_0_2_1"/>
<dbReference type="InParanoid" id="O96827"/>
<dbReference type="OMA" id="YRWYKHI"/>
<dbReference type="OrthoDB" id="331763at2759"/>
<dbReference type="PhylomeDB" id="O96827"/>
<dbReference type="Reactome" id="R-DME-156842">
    <property type="pathway name" value="Eukaryotic Translation Elongation"/>
</dbReference>
<dbReference type="BioGRID-ORCS" id="45249">
    <property type="hits" value="0 hits in 1 CRISPR screen"/>
</dbReference>
<dbReference type="ChiTaRS" id="Ef1beta">
    <property type="organism name" value="fly"/>
</dbReference>
<dbReference type="GenomeRNAi" id="45249"/>
<dbReference type="PRO" id="PR:O96827"/>
<dbReference type="Proteomes" id="UP000000803">
    <property type="component" value="Chromosome 2R"/>
</dbReference>
<dbReference type="Bgee" id="FBgn0028737">
    <property type="expression patterns" value="Expressed in eye disc (Drosophila) and 278 other cell types or tissues"/>
</dbReference>
<dbReference type="ExpressionAtlas" id="O96827">
    <property type="expression patterns" value="baseline and differential"/>
</dbReference>
<dbReference type="GO" id="GO:0005829">
    <property type="term" value="C:cytosol"/>
    <property type="evidence" value="ECO:0000318"/>
    <property type="project" value="GO_Central"/>
</dbReference>
<dbReference type="GO" id="GO:0005853">
    <property type="term" value="C:eukaryotic translation elongation factor 1 complex"/>
    <property type="evidence" value="ECO:0000250"/>
    <property type="project" value="FlyBase"/>
</dbReference>
<dbReference type="GO" id="GO:0005085">
    <property type="term" value="F:guanyl-nucleotide exchange factor activity"/>
    <property type="evidence" value="ECO:0000318"/>
    <property type="project" value="GO_Central"/>
</dbReference>
<dbReference type="GO" id="GO:0003746">
    <property type="term" value="F:translation elongation factor activity"/>
    <property type="evidence" value="ECO:0000250"/>
    <property type="project" value="FlyBase"/>
</dbReference>
<dbReference type="GO" id="GO:0006414">
    <property type="term" value="P:translational elongation"/>
    <property type="evidence" value="ECO:0000250"/>
    <property type="project" value="FlyBase"/>
</dbReference>
<dbReference type="CDD" id="cd00292">
    <property type="entry name" value="EF1B"/>
    <property type="match status" value="1"/>
</dbReference>
<dbReference type="CDD" id="cd10308">
    <property type="entry name" value="GST_C_eEF1b_like"/>
    <property type="match status" value="1"/>
</dbReference>
<dbReference type="FunFam" id="3.30.70.60:FF:000001">
    <property type="entry name" value="Elongation factor 1-beta 1 like"/>
    <property type="match status" value="1"/>
</dbReference>
<dbReference type="FunFam" id="1.20.1050.130:FF:000010">
    <property type="entry name" value="probable elongation factor 1-beta"/>
    <property type="match status" value="1"/>
</dbReference>
<dbReference type="Gene3D" id="1.20.1050.130">
    <property type="match status" value="1"/>
</dbReference>
<dbReference type="Gene3D" id="3.30.70.60">
    <property type="match status" value="1"/>
</dbReference>
<dbReference type="InterPro" id="IPR053836">
    <property type="entry name" value="Arc1-like_N"/>
</dbReference>
<dbReference type="InterPro" id="IPR036219">
    <property type="entry name" value="eEF-1beta-like_sf"/>
</dbReference>
<dbReference type="InterPro" id="IPR018940">
    <property type="entry name" value="EF-1_beta_acid_region_euk"/>
</dbReference>
<dbReference type="InterPro" id="IPR049720">
    <property type="entry name" value="EF1B_bsu/dsu"/>
</dbReference>
<dbReference type="InterPro" id="IPR014038">
    <property type="entry name" value="EF1B_bsu/dsu_GNE"/>
</dbReference>
<dbReference type="InterPro" id="IPR036282">
    <property type="entry name" value="Glutathione-S-Trfase_C_sf"/>
</dbReference>
<dbReference type="InterPro" id="IPR014717">
    <property type="entry name" value="Transl_elong_EF1B/ribsomal_bS6"/>
</dbReference>
<dbReference type="InterPro" id="IPR001326">
    <property type="entry name" value="Transl_elong_EF1B_B/D_CS"/>
</dbReference>
<dbReference type="PANTHER" id="PTHR11595">
    <property type="entry name" value="EF-HAND AND COILED-COIL DOMAIN-CONTAINING FAMILY MEMBER"/>
    <property type="match status" value="1"/>
</dbReference>
<dbReference type="PANTHER" id="PTHR11595:SF21">
    <property type="entry name" value="ELONGATION FACTOR 1-BETA"/>
    <property type="match status" value="1"/>
</dbReference>
<dbReference type="Pfam" id="PF21972">
    <property type="entry name" value="Arc1p_N_like"/>
    <property type="match status" value="1"/>
</dbReference>
<dbReference type="Pfam" id="PF10587">
    <property type="entry name" value="EF-1_beta_acid"/>
    <property type="match status" value="1"/>
</dbReference>
<dbReference type="Pfam" id="PF00736">
    <property type="entry name" value="EF1_GNE"/>
    <property type="match status" value="1"/>
</dbReference>
<dbReference type="SMART" id="SM01182">
    <property type="entry name" value="EF-1_beta_acid"/>
    <property type="match status" value="1"/>
</dbReference>
<dbReference type="SMART" id="SM00888">
    <property type="entry name" value="EF1_GNE"/>
    <property type="match status" value="1"/>
</dbReference>
<dbReference type="SUPFAM" id="SSF54984">
    <property type="entry name" value="eEF-1beta-like"/>
    <property type="match status" value="1"/>
</dbReference>
<dbReference type="SUPFAM" id="SSF47616">
    <property type="entry name" value="GST C-terminal domain-like"/>
    <property type="match status" value="1"/>
</dbReference>
<dbReference type="PROSITE" id="PS00824">
    <property type="entry name" value="EF1BD_1"/>
    <property type="match status" value="1"/>
</dbReference>
<dbReference type="PROSITE" id="PS00825">
    <property type="entry name" value="EF1BD_2"/>
    <property type="match status" value="1"/>
</dbReference>
<proteinExistence type="evidence at protein level"/>
<comment type="function">
    <text>EF-1-beta and EF-1-delta stimulate the exchange of GDP bound to EF-1-alpha to GTP.</text>
</comment>
<comment type="subunit">
    <text>EF-1 is composed of 4 subunits: alpha, beta, beta' and gamma.</text>
</comment>
<comment type="PTM">
    <text evidence="1">Phosphorylation affects the GDP/GTP exchange rate.</text>
</comment>
<comment type="similarity">
    <text evidence="4">Belongs to the EF-1-beta/EF-1-delta family.</text>
</comment>
<comment type="sequence caution" evidence="4">
    <conflict type="erroneous initiation">
        <sequence resource="EMBL-CDS" id="AAD46929"/>
    </conflict>
    <text>Extended N-terminus.</text>
</comment>
<reference key="1">
    <citation type="journal article" date="2000" name="Science">
        <title>The genome sequence of Drosophila melanogaster.</title>
        <authorList>
            <person name="Adams M.D."/>
            <person name="Celniker S.E."/>
            <person name="Holt R.A."/>
            <person name="Evans C.A."/>
            <person name="Gocayne J.D."/>
            <person name="Amanatides P.G."/>
            <person name="Scherer S.E."/>
            <person name="Li P.W."/>
            <person name="Hoskins R.A."/>
            <person name="Galle R.F."/>
            <person name="George R.A."/>
            <person name="Lewis S.E."/>
            <person name="Richards S."/>
            <person name="Ashburner M."/>
            <person name="Henderson S.N."/>
            <person name="Sutton G.G."/>
            <person name="Wortman J.R."/>
            <person name="Yandell M.D."/>
            <person name="Zhang Q."/>
            <person name="Chen L.X."/>
            <person name="Brandon R.C."/>
            <person name="Rogers Y.-H.C."/>
            <person name="Blazej R.G."/>
            <person name="Champe M."/>
            <person name="Pfeiffer B.D."/>
            <person name="Wan K.H."/>
            <person name="Doyle C."/>
            <person name="Baxter E.G."/>
            <person name="Helt G."/>
            <person name="Nelson C.R."/>
            <person name="Miklos G.L.G."/>
            <person name="Abril J.F."/>
            <person name="Agbayani A."/>
            <person name="An H.-J."/>
            <person name="Andrews-Pfannkoch C."/>
            <person name="Baldwin D."/>
            <person name="Ballew R.M."/>
            <person name="Basu A."/>
            <person name="Baxendale J."/>
            <person name="Bayraktaroglu L."/>
            <person name="Beasley E.M."/>
            <person name="Beeson K.Y."/>
            <person name="Benos P.V."/>
            <person name="Berman B.P."/>
            <person name="Bhandari D."/>
            <person name="Bolshakov S."/>
            <person name="Borkova D."/>
            <person name="Botchan M.R."/>
            <person name="Bouck J."/>
            <person name="Brokstein P."/>
            <person name="Brottier P."/>
            <person name="Burtis K.C."/>
            <person name="Busam D.A."/>
            <person name="Butler H."/>
            <person name="Cadieu E."/>
            <person name="Center A."/>
            <person name="Chandra I."/>
            <person name="Cherry J.M."/>
            <person name="Cawley S."/>
            <person name="Dahlke C."/>
            <person name="Davenport L.B."/>
            <person name="Davies P."/>
            <person name="de Pablos B."/>
            <person name="Delcher A."/>
            <person name="Deng Z."/>
            <person name="Mays A.D."/>
            <person name="Dew I."/>
            <person name="Dietz S.M."/>
            <person name="Dodson K."/>
            <person name="Doup L.E."/>
            <person name="Downes M."/>
            <person name="Dugan-Rocha S."/>
            <person name="Dunkov B.C."/>
            <person name="Dunn P."/>
            <person name="Durbin K.J."/>
            <person name="Evangelista C.C."/>
            <person name="Ferraz C."/>
            <person name="Ferriera S."/>
            <person name="Fleischmann W."/>
            <person name="Fosler C."/>
            <person name="Gabrielian A.E."/>
            <person name="Garg N.S."/>
            <person name="Gelbart W.M."/>
            <person name="Glasser K."/>
            <person name="Glodek A."/>
            <person name="Gong F."/>
            <person name="Gorrell J.H."/>
            <person name="Gu Z."/>
            <person name="Guan P."/>
            <person name="Harris M."/>
            <person name="Harris N.L."/>
            <person name="Harvey D.A."/>
            <person name="Heiman T.J."/>
            <person name="Hernandez J.R."/>
            <person name="Houck J."/>
            <person name="Hostin D."/>
            <person name="Houston K.A."/>
            <person name="Howland T.J."/>
            <person name="Wei M.-H."/>
            <person name="Ibegwam C."/>
            <person name="Jalali M."/>
            <person name="Kalush F."/>
            <person name="Karpen G.H."/>
            <person name="Ke Z."/>
            <person name="Kennison J.A."/>
            <person name="Ketchum K.A."/>
            <person name="Kimmel B.E."/>
            <person name="Kodira C.D."/>
            <person name="Kraft C.L."/>
            <person name="Kravitz S."/>
            <person name="Kulp D."/>
            <person name="Lai Z."/>
            <person name="Lasko P."/>
            <person name="Lei Y."/>
            <person name="Levitsky A.A."/>
            <person name="Li J.H."/>
            <person name="Li Z."/>
            <person name="Liang Y."/>
            <person name="Lin X."/>
            <person name="Liu X."/>
            <person name="Mattei B."/>
            <person name="McIntosh T.C."/>
            <person name="McLeod M.P."/>
            <person name="McPherson D."/>
            <person name="Merkulov G."/>
            <person name="Milshina N.V."/>
            <person name="Mobarry C."/>
            <person name="Morris J."/>
            <person name="Moshrefi A."/>
            <person name="Mount S.M."/>
            <person name="Moy M."/>
            <person name="Murphy B."/>
            <person name="Murphy L."/>
            <person name="Muzny D.M."/>
            <person name="Nelson D.L."/>
            <person name="Nelson D.R."/>
            <person name="Nelson K.A."/>
            <person name="Nixon K."/>
            <person name="Nusskern D.R."/>
            <person name="Pacleb J.M."/>
            <person name="Palazzolo M."/>
            <person name="Pittman G.S."/>
            <person name="Pan S."/>
            <person name="Pollard J."/>
            <person name="Puri V."/>
            <person name="Reese M.G."/>
            <person name="Reinert K."/>
            <person name="Remington K."/>
            <person name="Saunders R.D.C."/>
            <person name="Scheeler F."/>
            <person name="Shen H."/>
            <person name="Shue B.C."/>
            <person name="Siden-Kiamos I."/>
            <person name="Simpson M."/>
            <person name="Skupski M.P."/>
            <person name="Smith T.J."/>
            <person name="Spier E."/>
            <person name="Spradling A.C."/>
            <person name="Stapleton M."/>
            <person name="Strong R."/>
            <person name="Sun E."/>
            <person name="Svirskas R."/>
            <person name="Tector C."/>
            <person name="Turner R."/>
            <person name="Venter E."/>
            <person name="Wang A.H."/>
            <person name="Wang X."/>
            <person name="Wang Z.-Y."/>
            <person name="Wassarman D.A."/>
            <person name="Weinstock G.M."/>
            <person name="Weissenbach J."/>
            <person name="Williams S.M."/>
            <person name="Woodage T."/>
            <person name="Worley K.C."/>
            <person name="Wu D."/>
            <person name="Yang S."/>
            <person name="Yao Q.A."/>
            <person name="Ye J."/>
            <person name="Yeh R.-F."/>
            <person name="Zaveri J.S."/>
            <person name="Zhan M."/>
            <person name="Zhang G."/>
            <person name="Zhao Q."/>
            <person name="Zheng L."/>
            <person name="Zheng X.H."/>
            <person name="Zhong F.N."/>
            <person name="Zhong W."/>
            <person name="Zhou X."/>
            <person name="Zhu S.C."/>
            <person name="Zhu X."/>
            <person name="Smith H.O."/>
            <person name="Gibbs R.A."/>
            <person name="Myers E.W."/>
            <person name="Rubin G.M."/>
            <person name="Venter J.C."/>
        </authorList>
    </citation>
    <scope>NUCLEOTIDE SEQUENCE [LARGE SCALE GENOMIC DNA]</scope>
    <source>
        <strain>Berkeley</strain>
    </source>
</reference>
<reference key="2">
    <citation type="journal article" date="2002" name="Genome Biol.">
        <title>Annotation of the Drosophila melanogaster euchromatic genome: a systematic review.</title>
        <authorList>
            <person name="Misra S."/>
            <person name="Crosby M.A."/>
            <person name="Mungall C.J."/>
            <person name="Matthews B.B."/>
            <person name="Campbell K.S."/>
            <person name="Hradecky P."/>
            <person name="Huang Y."/>
            <person name="Kaminker J.S."/>
            <person name="Millburn G.H."/>
            <person name="Prochnik S.E."/>
            <person name="Smith C.D."/>
            <person name="Tupy J.L."/>
            <person name="Whitfield E.J."/>
            <person name="Bayraktaroglu L."/>
            <person name="Berman B.P."/>
            <person name="Bettencourt B.R."/>
            <person name="Celniker S.E."/>
            <person name="de Grey A.D.N.J."/>
            <person name="Drysdale R.A."/>
            <person name="Harris N.L."/>
            <person name="Richter J."/>
            <person name="Russo S."/>
            <person name="Schroeder A.J."/>
            <person name="Shu S.Q."/>
            <person name="Stapleton M."/>
            <person name="Yamada C."/>
            <person name="Ashburner M."/>
            <person name="Gelbart W.M."/>
            <person name="Rubin G.M."/>
            <person name="Lewis S.E."/>
        </authorList>
    </citation>
    <scope>GENOME REANNOTATION</scope>
    <source>
        <strain>Berkeley</strain>
    </source>
</reference>
<reference key="3">
    <citation type="journal article" date="2000" name="Science">
        <title>From sequence to chromosome: the tip of the X chromosome of D. melanogaster.</title>
        <authorList>
            <person name="Benos P.V."/>
            <person name="Gatt M.K."/>
            <person name="Ashburner M."/>
            <person name="Murphy L."/>
            <person name="Harris D."/>
            <person name="Barrell B.G."/>
            <person name="Ferraz C."/>
            <person name="Vidal S."/>
            <person name="Brun C."/>
            <person name="Demailles J."/>
            <person name="Cadieu E."/>
            <person name="Dreano S."/>
            <person name="Gloux S."/>
            <person name="Lelaure V."/>
            <person name="Mottier S."/>
            <person name="Galibert F."/>
            <person name="Borkova D."/>
            <person name="Minana B."/>
            <person name="Kafatos F.C."/>
            <person name="Louis C."/>
            <person name="Siden-Kiamos I."/>
            <person name="Bolshakov S."/>
            <person name="Papagiannakis G."/>
            <person name="Spanos L."/>
            <person name="Cox S."/>
            <person name="Madueno E."/>
            <person name="de Pablos B."/>
            <person name="Modolell J."/>
            <person name="Peter A."/>
            <person name="Schoettler P."/>
            <person name="Werner M."/>
            <person name="Mourkioti F."/>
            <person name="Beinert N."/>
            <person name="Dowe G."/>
            <person name="Schaefer U."/>
            <person name="Jaeckle H."/>
            <person name="Bucheton A."/>
            <person name="Callister D.M."/>
            <person name="Campbell L.A."/>
            <person name="Darlamitsou A."/>
            <person name="Henderson N.S."/>
            <person name="McMillan P.J."/>
            <person name="Salles C."/>
            <person name="Tait E.A."/>
            <person name="Valenti P."/>
            <person name="Saunders R.D.C."/>
            <person name="Glover D.M."/>
        </authorList>
    </citation>
    <scope>NUCLEOTIDE SEQUENCE [LARGE SCALE GENOMIC DNA]</scope>
    <source>
        <strain>Oregon-R</strain>
    </source>
</reference>
<reference key="4">
    <citation type="journal article" date="2000" name="Science">
        <title>A Drosophila complementary DNA resource.</title>
        <authorList>
            <person name="Rubin G.M."/>
            <person name="Hong L."/>
            <person name="Brokstein P."/>
            <person name="Evans-Holm M."/>
            <person name="Frise E."/>
            <person name="Stapleton M."/>
            <person name="Harvey D.A."/>
        </authorList>
    </citation>
    <scope>NUCLEOTIDE SEQUENCE [LARGE SCALE MRNA]</scope>
    <source>
        <strain>Berkeley</strain>
        <tissue>Embryo</tissue>
    </source>
</reference>
<reference key="5">
    <citation type="journal article" date="2008" name="J. Proteome Res.">
        <title>Phosphoproteome analysis of Drosophila melanogaster embryos.</title>
        <authorList>
            <person name="Zhai B."/>
            <person name="Villen J."/>
            <person name="Beausoleil S.A."/>
            <person name="Mintseris J."/>
            <person name="Gygi S.P."/>
        </authorList>
    </citation>
    <scope>PHOSPHORYLATION [LARGE SCALE ANALYSIS] AT SER-104</scope>
    <scope>IDENTIFICATION BY MASS SPECTROMETRY</scope>
    <source>
        <tissue>Embryo</tissue>
    </source>
</reference>
<name>EF1B_DROME</name>
<evidence type="ECO:0000250" key="1"/>
<evidence type="ECO:0000256" key="2">
    <source>
        <dbReference type="SAM" id="MobiDB-lite"/>
    </source>
</evidence>
<evidence type="ECO:0000269" key="3">
    <source>
    </source>
</evidence>
<evidence type="ECO:0000305" key="4"/>
<evidence type="ECO:0000312" key="5">
    <source>
        <dbReference type="FlyBase" id="FBgn0028737"/>
    </source>
</evidence>
<protein>
    <recommendedName>
        <fullName>Probable elongation factor 1-beta</fullName>
        <shortName>EF-1-beta</shortName>
    </recommendedName>
</protein>
<organism>
    <name type="scientific">Drosophila melanogaster</name>
    <name type="common">Fruit fly</name>
    <dbReference type="NCBI Taxonomy" id="7227"/>
    <lineage>
        <taxon>Eukaryota</taxon>
        <taxon>Metazoa</taxon>
        <taxon>Ecdysozoa</taxon>
        <taxon>Arthropoda</taxon>
        <taxon>Hexapoda</taxon>
        <taxon>Insecta</taxon>
        <taxon>Pterygota</taxon>
        <taxon>Neoptera</taxon>
        <taxon>Endopterygota</taxon>
        <taxon>Diptera</taxon>
        <taxon>Brachycera</taxon>
        <taxon>Muscomorpha</taxon>
        <taxon>Ephydroidea</taxon>
        <taxon>Drosophilidae</taxon>
        <taxon>Drosophila</taxon>
        <taxon>Sophophora</taxon>
    </lineage>
</organism>
<accession>O96827</accession>